<accession>Q2RXP8</accession>
<organism>
    <name type="scientific">Rhodospirillum rubrum (strain ATCC 11170 / ATH 1.1.1 / DSM 467 / LMG 4362 / NCIMB 8255 / S1)</name>
    <dbReference type="NCBI Taxonomy" id="269796"/>
    <lineage>
        <taxon>Bacteria</taxon>
        <taxon>Pseudomonadati</taxon>
        <taxon>Pseudomonadota</taxon>
        <taxon>Alphaproteobacteria</taxon>
        <taxon>Rhodospirillales</taxon>
        <taxon>Rhodospirillaceae</taxon>
        <taxon>Rhodospirillum</taxon>
    </lineage>
</organism>
<protein>
    <recommendedName>
        <fullName evidence="1">Integration host factor subunit beta</fullName>
        <shortName evidence="1">IHF-beta</shortName>
    </recommendedName>
</protein>
<comment type="function">
    <text evidence="1">This protein is one of the two subunits of integration host factor, a specific DNA-binding protein that functions in genetic recombination as well as in transcriptional and translational control.</text>
</comment>
<comment type="subunit">
    <text evidence="1">Heterodimer of an alpha and a beta chain.</text>
</comment>
<comment type="similarity">
    <text evidence="1">Belongs to the bacterial histone-like protein family.</text>
</comment>
<feature type="chain" id="PRO_1000122234" description="Integration host factor subunit beta">
    <location>
        <begin position="1"/>
        <end position="100"/>
    </location>
</feature>
<sequence length="100" mass="11296">MTKSELIARIAERNPHLYQRDVERIVSTIFDEIADALARGDRVELRGFGAFSVKRRDARMGRNPRTGETVDVDAKVAPYFKTGKQLRELLNGGESESDDD</sequence>
<keyword id="KW-0233">DNA recombination</keyword>
<keyword id="KW-0238">DNA-binding</keyword>
<keyword id="KW-1185">Reference proteome</keyword>
<keyword id="KW-0804">Transcription</keyword>
<keyword id="KW-0805">Transcription regulation</keyword>
<keyword id="KW-0810">Translation regulation</keyword>
<name>IHFB_RHORT</name>
<proteinExistence type="inferred from homology"/>
<gene>
    <name evidence="1" type="primary">ihfB</name>
    <name evidence="1" type="synonym">himD</name>
    <name type="ordered locus">Rru_A0292</name>
</gene>
<evidence type="ECO:0000255" key="1">
    <source>
        <dbReference type="HAMAP-Rule" id="MF_00381"/>
    </source>
</evidence>
<dbReference type="EMBL" id="CP000230">
    <property type="protein sequence ID" value="ABC21097.1"/>
    <property type="molecule type" value="Genomic_DNA"/>
</dbReference>
<dbReference type="RefSeq" id="WP_011388045.1">
    <property type="nucleotide sequence ID" value="NC_007643.1"/>
</dbReference>
<dbReference type="RefSeq" id="YP_425384.1">
    <property type="nucleotide sequence ID" value="NC_007643.1"/>
</dbReference>
<dbReference type="SMR" id="Q2RXP8"/>
<dbReference type="STRING" id="269796.Rru_A0292"/>
<dbReference type="EnsemblBacteria" id="ABC21097">
    <property type="protein sequence ID" value="ABC21097"/>
    <property type="gene ID" value="Rru_A0292"/>
</dbReference>
<dbReference type="KEGG" id="rru:Rru_A0292"/>
<dbReference type="PATRIC" id="fig|269796.9.peg.347"/>
<dbReference type="eggNOG" id="COG0776">
    <property type="taxonomic scope" value="Bacteria"/>
</dbReference>
<dbReference type="HOGENOM" id="CLU_105066_2_0_5"/>
<dbReference type="PhylomeDB" id="Q2RXP8"/>
<dbReference type="Proteomes" id="UP000001929">
    <property type="component" value="Chromosome"/>
</dbReference>
<dbReference type="GO" id="GO:0005694">
    <property type="term" value="C:chromosome"/>
    <property type="evidence" value="ECO:0007669"/>
    <property type="project" value="InterPro"/>
</dbReference>
<dbReference type="GO" id="GO:0005829">
    <property type="term" value="C:cytosol"/>
    <property type="evidence" value="ECO:0007669"/>
    <property type="project" value="TreeGrafter"/>
</dbReference>
<dbReference type="GO" id="GO:0003677">
    <property type="term" value="F:DNA binding"/>
    <property type="evidence" value="ECO:0007669"/>
    <property type="project" value="UniProtKB-UniRule"/>
</dbReference>
<dbReference type="GO" id="GO:0030527">
    <property type="term" value="F:structural constituent of chromatin"/>
    <property type="evidence" value="ECO:0007669"/>
    <property type="project" value="InterPro"/>
</dbReference>
<dbReference type="GO" id="GO:0006310">
    <property type="term" value="P:DNA recombination"/>
    <property type="evidence" value="ECO:0007669"/>
    <property type="project" value="UniProtKB-UniRule"/>
</dbReference>
<dbReference type="GO" id="GO:0006355">
    <property type="term" value="P:regulation of DNA-templated transcription"/>
    <property type="evidence" value="ECO:0007669"/>
    <property type="project" value="UniProtKB-UniRule"/>
</dbReference>
<dbReference type="GO" id="GO:0006417">
    <property type="term" value="P:regulation of translation"/>
    <property type="evidence" value="ECO:0007669"/>
    <property type="project" value="UniProtKB-UniRule"/>
</dbReference>
<dbReference type="CDD" id="cd13836">
    <property type="entry name" value="IHF_B"/>
    <property type="match status" value="1"/>
</dbReference>
<dbReference type="Gene3D" id="4.10.520.10">
    <property type="entry name" value="IHF-like DNA-binding proteins"/>
    <property type="match status" value="1"/>
</dbReference>
<dbReference type="HAMAP" id="MF_00381">
    <property type="entry name" value="IHF_beta"/>
    <property type="match status" value="1"/>
</dbReference>
<dbReference type="InterPro" id="IPR000119">
    <property type="entry name" value="Hist_DNA-bd"/>
</dbReference>
<dbReference type="InterPro" id="IPR020816">
    <property type="entry name" value="Histone-like_DNA-bd_CS"/>
</dbReference>
<dbReference type="InterPro" id="IPR010992">
    <property type="entry name" value="IHF-like_DNA-bd_dom_sf"/>
</dbReference>
<dbReference type="InterPro" id="IPR005685">
    <property type="entry name" value="IHF_beta"/>
</dbReference>
<dbReference type="NCBIfam" id="TIGR00988">
    <property type="entry name" value="hip"/>
    <property type="match status" value="1"/>
</dbReference>
<dbReference type="NCBIfam" id="NF001222">
    <property type="entry name" value="PRK00199.1"/>
    <property type="match status" value="1"/>
</dbReference>
<dbReference type="PANTHER" id="PTHR33175">
    <property type="entry name" value="DNA-BINDING PROTEIN HU"/>
    <property type="match status" value="1"/>
</dbReference>
<dbReference type="PANTHER" id="PTHR33175:SF5">
    <property type="entry name" value="INTEGRATION HOST FACTOR SUBUNIT BETA"/>
    <property type="match status" value="1"/>
</dbReference>
<dbReference type="Pfam" id="PF00216">
    <property type="entry name" value="Bac_DNA_binding"/>
    <property type="match status" value="1"/>
</dbReference>
<dbReference type="PRINTS" id="PR01727">
    <property type="entry name" value="DNABINDINGHU"/>
</dbReference>
<dbReference type="SMART" id="SM00411">
    <property type="entry name" value="BHL"/>
    <property type="match status" value="1"/>
</dbReference>
<dbReference type="SUPFAM" id="SSF47729">
    <property type="entry name" value="IHF-like DNA-binding proteins"/>
    <property type="match status" value="1"/>
</dbReference>
<dbReference type="PROSITE" id="PS00045">
    <property type="entry name" value="HISTONE_LIKE"/>
    <property type="match status" value="1"/>
</dbReference>
<reference key="1">
    <citation type="journal article" date="2011" name="Stand. Genomic Sci.">
        <title>Complete genome sequence of Rhodospirillum rubrum type strain (S1).</title>
        <authorList>
            <person name="Munk A.C."/>
            <person name="Copeland A."/>
            <person name="Lucas S."/>
            <person name="Lapidus A."/>
            <person name="Del Rio T.G."/>
            <person name="Barry K."/>
            <person name="Detter J.C."/>
            <person name="Hammon N."/>
            <person name="Israni S."/>
            <person name="Pitluck S."/>
            <person name="Brettin T."/>
            <person name="Bruce D."/>
            <person name="Han C."/>
            <person name="Tapia R."/>
            <person name="Gilna P."/>
            <person name="Schmutz J."/>
            <person name="Larimer F."/>
            <person name="Land M."/>
            <person name="Kyrpides N.C."/>
            <person name="Mavromatis K."/>
            <person name="Richardson P."/>
            <person name="Rohde M."/>
            <person name="Goeker M."/>
            <person name="Klenk H.P."/>
            <person name="Zhang Y."/>
            <person name="Roberts G.P."/>
            <person name="Reslewic S."/>
            <person name="Schwartz D.C."/>
        </authorList>
    </citation>
    <scope>NUCLEOTIDE SEQUENCE [LARGE SCALE GENOMIC DNA]</scope>
    <source>
        <strain>ATCC 11170 / ATH 1.1.1 / DSM 467 / LMG 4362 / NCIMB 8255 / S1</strain>
    </source>
</reference>